<comment type="function">
    <text evidence="1">Carrier protein involved in the D-alanylation of lipoteichoic acid (LTA). The loading of thioester-linked D-alanine onto DltC is catalyzed by D-alanine--D-alanyl carrier protein ligase DltA. The DltC-carried D-alanyl group is further transferred to cell membrane phosphatidylglycerol (PG) by forming an ester bond, probably catalyzed by DltD. D-alanylation of LTA plays an important role in modulating the properties of the cell wall in Gram-positive bacteria, influencing the net charge of the cell wall.</text>
</comment>
<comment type="pathway">
    <text evidence="1">Cell wall biogenesis; lipoteichoic acid biosynthesis.</text>
</comment>
<comment type="subcellular location">
    <subcellularLocation>
        <location evidence="1">Cytoplasm</location>
    </subcellularLocation>
</comment>
<comment type="PTM">
    <text evidence="1">4'-phosphopantetheine is transferred from CoA to a specific serine of apo-DCP.</text>
</comment>
<comment type="similarity">
    <text evidence="1">Belongs to the DltC family.</text>
</comment>
<name>DLTC_STRS2</name>
<feature type="chain" id="PRO_1000024934" description="D-alanyl carrier protein">
    <location>
        <begin position="1"/>
        <end position="79"/>
    </location>
</feature>
<feature type="domain" description="Carrier" evidence="1">
    <location>
        <begin position="1"/>
        <end position="77"/>
    </location>
</feature>
<feature type="modified residue" description="O-(pantetheine 4'-phosphoryl)serine" evidence="1">
    <location>
        <position position="35"/>
    </location>
</feature>
<protein>
    <recommendedName>
        <fullName evidence="1">D-alanyl carrier protein</fullName>
        <shortName evidence="1">DCP</shortName>
    </recommendedName>
    <alternativeName>
        <fullName evidence="1">D-alanine--poly(phosphoribitol) ligase subunit 2</fullName>
    </alternativeName>
</protein>
<proteinExistence type="inferred from homology"/>
<keyword id="KW-0961">Cell wall biogenesis/degradation</keyword>
<keyword id="KW-0963">Cytoplasm</keyword>
<keyword id="KW-0596">Phosphopantetheine</keyword>
<keyword id="KW-0597">Phosphoprotein</keyword>
<evidence type="ECO:0000255" key="1">
    <source>
        <dbReference type="HAMAP-Rule" id="MF_00565"/>
    </source>
</evidence>
<dbReference type="EMBL" id="CP000408">
    <property type="protein sequence ID" value="ABP91798.1"/>
    <property type="molecule type" value="Genomic_DNA"/>
</dbReference>
<dbReference type="SMR" id="A4W0A9"/>
<dbReference type="KEGG" id="ssv:SSU98_0640"/>
<dbReference type="HOGENOM" id="CLU_108696_19_0_9"/>
<dbReference type="UniPathway" id="UPA00556"/>
<dbReference type="GO" id="GO:0005737">
    <property type="term" value="C:cytoplasm"/>
    <property type="evidence" value="ECO:0007669"/>
    <property type="project" value="UniProtKB-SubCell"/>
</dbReference>
<dbReference type="GO" id="GO:0036370">
    <property type="term" value="F:D-alanyl carrier activity"/>
    <property type="evidence" value="ECO:0007669"/>
    <property type="project" value="UniProtKB-UniRule"/>
</dbReference>
<dbReference type="GO" id="GO:0071555">
    <property type="term" value="P:cell wall organization"/>
    <property type="evidence" value="ECO:0007669"/>
    <property type="project" value="UniProtKB-KW"/>
</dbReference>
<dbReference type="GO" id="GO:0070395">
    <property type="term" value="P:lipoteichoic acid biosynthetic process"/>
    <property type="evidence" value="ECO:0007669"/>
    <property type="project" value="UniProtKB-UniRule"/>
</dbReference>
<dbReference type="Gene3D" id="1.10.1200.10">
    <property type="entry name" value="ACP-like"/>
    <property type="match status" value="1"/>
</dbReference>
<dbReference type="HAMAP" id="MF_00565">
    <property type="entry name" value="DltC"/>
    <property type="match status" value="1"/>
</dbReference>
<dbReference type="InterPro" id="IPR036736">
    <property type="entry name" value="ACP-like_sf"/>
</dbReference>
<dbReference type="InterPro" id="IPR003230">
    <property type="entry name" value="DltC"/>
</dbReference>
<dbReference type="InterPro" id="IPR009081">
    <property type="entry name" value="PP-bd_ACP"/>
</dbReference>
<dbReference type="NCBIfam" id="TIGR01688">
    <property type="entry name" value="dltC"/>
    <property type="match status" value="1"/>
</dbReference>
<dbReference type="NCBIfam" id="NF003464">
    <property type="entry name" value="PRK05087.1"/>
    <property type="match status" value="1"/>
</dbReference>
<dbReference type="Pfam" id="PF00550">
    <property type="entry name" value="PP-binding"/>
    <property type="match status" value="1"/>
</dbReference>
<dbReference type="SUPFAM" id="SSF47336">
    <property type="entry name" value="ACP-like"/>
    <property type="match status" value="1"/>
</dbReference>
<dbReference type="PROSITE" id="PS50075">
    <property type="entry name" value="CARRIER"/>
    <property type="match status" value="1"/>
</dbReference>
<reference key="1">
    <citation type="journal article" date="2007" name="PLoS ONE">
        <title>A glimpse of streptococcal toxic shock syndrome from comparative genomics of S. suis 2 Chinese isolates.</title>
        <authorList>
            <person name="Chen C."/>
            <person name="Tang J."/>
            <person name="Dong W."/>
            <person name="Wang C."/>
            <person name="Feng Y."/>
            <person name="Wang J."/>
            <person name="Zheng F."/>
            <person name="Pan X."/>
            <person name="Liu D."/>
            <person name="Li M."/>
            <person name="Song Y."/>
            <person name="Zhu X."/>
            <person name="Sun H."/>
            <person name="Feng T."/>
            <person name="Guo Z."/>
            <person name="Ju A."/>
            <person name="Ge J."/>
            <person name="Dong Y."/>
            <person name="Sun W."/>
            <person name="Jiang Y."/>
            <person name="Wang J."/>
            <person name="Yan J."/>
            <person name="Yang H."/>
            <person name="Wang X."/>
            <person name="Gao G.F."/>
            <person name="Yang R."/>
            <person name="Wang J."/>
            <person name="Yu J."/>
        </authorList>
    </citation>
    <scope>NUCLEOTIDE SEQUENCE [LARGE SCALE GENOMIC DNA]</scope>
    <source>
        <strain>98HAH33</strain>
    </source>
</reference>
<gene>
    <name evidence="1" type="primary">dltC</name>
    <name type="ordered locus">SSU98_0640</name>
</gene>
<accession>A4W0A9</accession>
<organism>
    <name type="scientific">Streptococcus suis (strain 98HAH33)</name>
    <dbReference type="NCBI Taxonomy" id="391296"/>
    <lineage>
        <taxon>Bacteria</taxon>
        <taxon>Bacillati</taxon>
        <taxon>Bacillota</taxon>
        <taxon>Bacilli</taxon>
        <taxon>Lactobacillales</taxon>
        <taxon>Streptococcaceae</taxon>
        <taxon>Streptococcus</taxon>
    </lineage>
</organism>
<sequence length="79" mass="8939">MDVKETILNIIQELFMEDVSEMMDEDLLHAGVLDSMGTVELIVELESRFNITVPVSEFGREDWNTANKIISGVVELMHA</sequence>